<dbReference type="EMBL" id="X51759">
    <property type="protein sequence ID" value="CAA36063.1"/>
    <property type="molecule type" value="mRNA"/>
</dbReference>
<dbReference type="PIR" id="JN0696">
    <property type="entry name" value="JN0696"/>
</dbReference>
<dbReference type="PDB" id="6PX6">
    <property type="method" value="X-ray"/>
    <property type="resolution" value="3.00 A"/>
    <property type="chains" value="C=77-86"/>
</dbReference>
<dbReference type="PDB" id="6PY2">
    <property type="method" value="X-ray"/>
    <property type="resolution" value="2.83 A"/>
    <property type="chains" value="C=77-86"/>
</dbReference>
<dbReference type="PDBsum" id="6PX6"/>
<dbReference type="PDBsum" id="6PY2"/>
<dbReference type="SMR" id="P16315"/>
<dbReference type="STRING" id="4565.P16315"/>
<dbReference type="Proteomes" id="UP000019116">
    <property type="component" value="Unplaced"/>
</dbReference>
<dbReference type="GO" id="GO:0045735">
    <property type="term" value="F:nutrient reservoir activity"/>
    <property type="evidence" value="ECO:0007669"/>
    <property type="project" value="UniProtKB-KW"/>
</dbReference>
<dbReference type="Gene3D" id="1.10.110.10">
    <property type="entry name" value="Plant lipid-transfer and hydrophobic proteins"/>
    <property type="match status" value="1"/>
</dbReference>
<dbReference type="InterPro" id="IPR036312">
    <property type="entry name" value="Bifun_inhib/LTP/seed_sf"/>
</dbReference>
<dbReference type="InterPro" id="IPR016140">
    <property type="entry name" value="Bifunc_inhib/LTP/seed_store"/>
</dbReference>
<dbReference type="InterPro" id="IPR001954">
    <property type="entry name" value="Glia_glutenin"/>
</dbReference>
<dbReference type="PANTHER" id="PTHR33454">
    <property type="entry name" value="PROLAMIN PPROL 14P"/>
    <property type="match status" value="1"/>
</dbReference>
<dbReference type="PANTHER" id="PTHR33454:SF19">
    <property type="entry name" value="PROLAMIN PPROL 14P"/>
    <property type="match status" value="1"/>
</dbReference>
<dbReference type="Pfam" id="PF13016">
    <property type="entry name" value="Gliadin"/>
    <property type="match status" value="1"/>
</dbReference>
<dbReference type="PRINTS" id="PR00208">
    <property type="entry name" value="GLIADGLUTEN"/>
</dbReference>
<dbReference type="PRINTS" id="PR00209">
    <property type="entry name" value="GLIADIN"/>
</dbReference>
<dbReference type="SMART" id="SM00499">
    <property type="entry name" value="AAI"/>
    <property type="match status" value="1"/>
</dbReference>
<dbReference type="SUPFAM" id="SSF47699">
    <property type="entry name" value="Bifunctional inhibitor/lipid-transfer protein/seed storage 2S albumin"/>
    <property type="match status" value="1"/>
</dbReference>
<reference key="1">
    <citation type="journal article" date="1991" name="Theor. Appl. Genet.">
        <title>Molecular characterization of a low-molecular-weight glutenin cDNA clone from Triticum durum.</title>
        <authorList>
            <person name="Cassidy B.G."/>
            <person name="Dvorak J."/>
        </authorList>
        <dbReference type="AGRICOLA" id="IND91032820"/>
    </citation>
    <scope>NUCLEOTIDE SEQUENCE [MRNA]</scope>
    <source>
        <strain>cv. Mexicali</strain>
    </source>
</reference>
<organism>
    <name type="scientific">Triticum aestivum</name>
    <name type="common">Wheat</name>
    <dbReference type="NCBI Taxonomy" id="4565"/>
    <lineage>
        <taxon>Eukaryota</taxon>
        <taxon>Viridiplantae</taxon>
        <taxon>Streptophyta</taxon>
        <taxon>Embryophyta</taxon>
        <taxon>Tracheophyta</taxon>
        <taxon>Spermatophyta</taxon>
        <taxon>Magnoliopsida</taxon>
        <taxon>Liliopsida</taxon>
        <taxon>Poales</taxon>
        <taxon>Poaceae</taxon>
        <taxon>BOP clade</taxon>
        <taxon>Pooideae</taxon>
        <taxon>Triticodae</taxon>
        <taxon>Triticeae</taxon>
        <taxon>Triticinae</taxon>
        <taxon>Triticum</taxon>
    </lineage>
</organism>
<comment type="function">
    <text>Glutenins are high-molecular weight seed storage proteins of wheat endosperm. Thought to be responsible for the visco-elastic property of wheat dough.</text>
</comment>
<comment type="subunit">
    <text>Disulfide-bridge linked aggregates.</text>
</comment>
<comment type="similarity">
    <text evidence="2">Belongs to the gliadin/glutenin family.</text>
</comment>
<name>GLTC_WHEAT</name>
<evidence type="ECO:0000256" key="1">
    <source>
        <dbReference type="SAM" id="MobiDB-lite"/>
    </source>
</evidence>
<evidence type="ECO:0000305" key="2"/>
<protein>
    <recommendedName>
        <fullName>Glutenin, low molecular weight subunit PTDUCD1</fullName>
    </recommendedName>
</protein>
<sequence length="295" mass="33379">MKTFLVFALLAVVATSTIAQMETSCIPGLERPWQEQPLPPQHTLFPQQQPFPQQQQPPFSQQQPSFLQQQPILPQLPFSQQQQPVLPQQSPFSQQQLVLPPQQQYQQVLQQQIPIVQPSVLQQLNPCKVFLQQQCNPVAMPQRLARSQMLQQSSCHVMQQQCCQQLPQIPEQSRYDVIRAITYSIILQEQQQGFVQAQQQQPQQLGQGVSQSQQQSQQQLGQCSFQQPQQQLGQQPQQQQVLQGTFLQPHQIAHLEVMTSIALRTLPTMCSVNVPLYSSTTSVPFSVGTGVGAYL</sequence>
<keyword id="KW-0002">3D-structure</keyword>
<keyword id="KW-1015">Disulfide bond</keyword>
<keyword id="KW-1185">Reference proteome</keyword>
<keyword id="KW-0677">Repeat</keyword>
<keyword id="KW-0708">Seed storage protein</keyword>
<keyword id="KW-0732">Signal</keyword>
<keyword id="KW-0758">Storage protein</keyword>
<accession>P16315</accession>
<feature type="signal peptide">
    <location>
        <begin position="1"/>
        <end position="20"/>
    </location>
</feature>
<feature type="chain" id="PRO_0000032213" description="Glutenin, low molecular weight subunit PTDUCD1">
    <location>
        <begin position="21"/>
        <end position="295"/>
    </location>
</feature>
<feature type="region of interest" description="Disordered" evidence="1">
    <location>
        <begin position="30"/>
        <end position="61"/>
    </location>
</feature>
<feature type="compositionally biased region" description="Low complexity" evidence="1">
    <location>
        <begin position="41"/>
        <end position="61"/>
    </location>
</feature>
<proteinExistence type="evidence at protein level"/>